<organism>
    <name type="scientific">Ligilactobacillus salivarius (strain UCC118)</name>
    <name type="common">Lactobacillus salivarius</name>
    <dbReference type="NCBI Taxonomy" id="362948"/>
    <lineage>
        <taxon>Bacteria</taxon>
        <taxon>Bacillati</taxon>
        <taxon>Bacillota</taxon>
        <taxon>Bacilli</taxon>
        <taxon>Lactobacillales</taxon>
        <taxon>Lactobacillaceae</taxon>
        <taxon>Ligilactobacillus</taxon>
    </lineage>
</organism>
<name>RS2_LIGS1</name>
<comment type="similarity">
    <text evidence="1">Belongs to the universal ribosomal protein uS2 family.</text>
</comment>
<evidence type="ECO:0000255" key="1">
    <source>
        <dbReference type="HAMAP-Rule" id="MF_00291"/>
    </source>
</evidence>
<evidence type="ECO:0000305" key="2"/>
<feature type="chain" id="PRO_1000003987" description="Small ribosomal subunit protein uS2">
    <location>
        <begin position="1"/>
        <end position="265"/>
    </location>
</feature>
<reference key="1">
    <citation type="journal article" date="2006" name="Proc. Natl. Acad. Sci. U.S.A.">
        <title>Multireplicon genome architecture of Lactobacillus salivarius.</title>
        <authorList>
            <person name="Claesson M.J."/>
            <person name="Li Y."/>
            <person name="Leahy S."/>
            <person name="Canchaya C."/>
            <person name="van Pijkeren J.P."/>
            <person name="Cerdeno-Tarraga A.M."/>
            <person name="Parkhill J."/>
            <person name="Flynn S."/>
            <person name="O'Sullivan G.C."/>
            <person name="Collins J.K."/>
            <person name="Higgins D."/>
            <person name="Shanahan F."/>
            <person name="Fitzgerald G.F."/>
            <person name="van Sinderen D."/>
            <person name="O'Toole P.W."/>
        </authorList>
    </citation>
    <scope>NUCLEOTIDE SEQUENCE [LARGE SCALE GENOMIC DNA]</scope>
    <source>
        <strain>UCC118</strain>
    </source>
</reference>
<gene>
    <name evidence="1" type="primary">rpsB</name>
    <name type="ordered locus">LSL_0511</name>
</gene>
<dbReference type="EMBL" id="CP000233">
    <property type="protein sequence ID" value="ABD99320.1"/>
    <property type="molecule type" value="Genomic_DNA"/>
</dbReference>
<dbReference type="RefSeq" id="WP_011475795.1">
    <property type="nucleotide sequence ID" value="NC_007929.1"/>
</dbReference>
<dbReference type="RefSeq" id="YP_535403.1">
    <property type="nucleotide sequence ID" value="NC_007929.1"/>
</dbReference>
<dbReference type="SMR" id="Q1WUL5"/>
<dbReference type="STRING" id="362948.LSL_0511"/>
<dbReference type="KEGG" id="lsl:LSL_0511"/>
<dbReference type="PATRIC" id="fig|362948.14.peg.589"/>
<dbReference type="HOGENOM" id="CLU_040318_1_2_9"/>
<dbReference type="OrthoDB" id="9808036at2"/>
<dbReference type="Proteomes" id="UP000006559">
    <property type="component" value="Chromosome"/>
</dbReference>
<dbReference type="GO" id="GO:0022627">
    <property type="term" value="C:cytosolic small ribosomal subunit"/>
    <property type="evidence" value="ECO:0007669"/>
    <property type="project" value="TreeGrafter"/>
</dbReference>
<dbReference type="GO" id="GO:0003735">
    <property type="term" value="F:structural constituent of ribosome"/>
    <property type="evidence" value="ECO:0007669"/>
    <property type="project" value="InterPro"/>
</dbReference>
<dbReference type="GO" id="GO:0006412">
    <property type="term" value="P:translation"/>
    <property type="evidence" value="ECO:0007669"/>
    <property type="project" value="UniProtKB-UniRule"/>
</dbReference>
<dbReference type="CDD" id="cd01425">
    <property type="entry name" value="RPS2"/>
    <property type="match status" value="1"/>
</dbReference>
<dbReference type="FunFam" id="1.10.287.610:FF:000001">
    <property type="entry name" value="30S ribosomal protein S2"/>
    <property type="match status" value="1"/>
</dbReference>
<dbReference type="Gene3D" id="3.40.50.10490">
    <property type="entry name" value="Glucose-6-phosphate isomerase like protein, domain 1"/>
    <property type="match status" value="1"/>
</dbReference>
<dbReference type="Gene3D" id="1.10.287.610">
    <property type="entry name" value="Helix hairpin bin"/>
    <property type="match status" value="1"/>
</dbReference>
<dbReference type="HAMAP" id="MF_00291_B">
    <property type="entry name" value="Ribosomal_uS2_B"/>
    <property type="match status" value="1"/>
</dbReference>
<dbReference type="InterPro" id="IPR001865">
    <property type="entry name" value="Ribosomal_uS2"/>
</dbReference>
<dbReference type="InterPro" id="IPR005706">
    <property type="entry name" value="Ribosomal_uS2_bac/mit/plastid"/>
</dbReference>
<dbReference type="InterPro" id="IPR018130">
    <property type="entry name" value="Ribosomal_uS2_CS"/>
</dbReference>
<dbReference type="InterPro" id="IPR023591">
    <property type="entry name" value="Ribosomal_uS2_flav_dom_sf"/>
</dbReference>
<dbReference type="NCBIfam" id="TIGR01011">
    <property type="entry name" value="rpsB_bact"/>
    <property type="match status" value="1"/>
</dbReference>
<dbReference type="PANTHER" id="PTHR12534">
    <property type="entry name" value="30S RIBOSOMAL PROTEIN S2 PROKARYOTIC AND ORGANELLAR"/>
    <property type="match status" value="1"/>
</dbReference>
<dbReference type="PANTHER" id="PTHR12534:SF0">
    <property type="entry name" value="SMALL RIBOSOMAL SUBUNIT PROTEIN US2M"/>
    <property type="match status" value="1"/>
</dbReference>
<dbReference type="Pfam" id="PF00318">
    <property type="entry name" value="Ribosomal_S2"/>
    <property type="match status" value="1"/>
</dbReference>
<dbReference type="PRINTS" id="PR00395">
    <property type="entry name" value="RIBOSOMALS2"/>
</dbReference>
<dbReference type="SUPFAM" id="SSF52313">
    <property type="entry name" value="Ribosomal protein S2"/>
    <property type="match status" value="1"/>
</dbReference>
<dbReference type="PROSITE" id="PS00962">
    <property type="entry name" value="RIBOSOMAL_S2_1"/>
    <property type="match status" value="1"/>
</dbReference>
<dbReference type="PROSITE" id="PS00963">
    <property type="entry name" value="RIBOSOMAL_S2_2"/>
    <property type="match status" value="1"/>
</dbReference>
<accession>Q1WUL5</accession>
<sequence>MAVITMKQLLEAGVHFGHQTRRWNPKMKKYIFTERNGIYIIDLQKTVKLIDDAYDFIKDAASDDGVVLFVGTKKQAQEAIEEEAKRAGQYYVNHRWLGGTLTNWNTIQKRIKKLKEIKAMAEDGTFDRLPKKEVALLIKQRDRLEKFLGGIEDMPRIPDVLFIVDPRKERIAVKEAQKLNIPIVAMVDTNADPDEIDVKIPSNDDAIRAVRLITSKMADAIIEGRQGEDDAPVTEDTFENTDDQVDSIEDIVEVVEGDNDSTDAE</sequence>
<proteinExistence type="inferred from homology"/>
<protein>
    <recommendedName>
        <fullName evidence="1">Small ribosomal subunit protein uS2</fullName>
    </recommendedName>
    <alternativeName>
        <fullName evidence="2">30S ribosomal protein S2</fullName>
    </alternativeName>
</protein>
<keyword id="KW-1185">Reference proteome</keyword>
<keyword id="KW-0687">Ribonucleoprotein</keyword>
<keyword id="KW-0689">Ribosomal protein</keyword>